<accession>A7X1Z8</accession>
<name>Y1332_STAA1</name>
<organism>
    <name type="scientific">Staphylococcus aureus (strain Mu3 / ATCC 700698)</name>
    <dbReference type="NCBI Taxonomy" id="418127"/>
    <lineage>
        <taxon>Bacteria</taxon>
        <taxon>Bacillati</taxon>
        <taxon>Bacillota</taxon>
        <taxon>Bacilli</taxon>
        <taxon>Bacillales</taxon>
        <taxon>Staphylococcaceae</taxon>
        <taxon>Staphylococcus</taxon>
    </lineage>
</organism>
<comment type="subcellular location">
    <subcellularLocation>
        <location evidence="1">Cell membrane</location>
        <topology evidence="1">Single-pass membrane protein</topology>
    </subcellularLocation>
</comment>
<comment type="similarity">
    <text evidence="1">Belongs to the UPF0154 family.</text>
</comment>
<proteinExistence type="inferred from homology"/>
<reference key="1">
    <citation type="journal article" date="2008" name="Antimicrob. Agents Chemother.">
        <title>Mutated response regulator graR is responsible for phenotypic conversion of Staphylococcus aureus from heterogeneous vancomycin-intermediate resistance to vancomycin-intermediate resistance.</title>
        <authorList>
            <person name="Neoh H.-M."/>
            <person name="Cui L."/>
            <person name="Yuzawa H."/>
            <person name="Takeuchi F."/>
            <person name="Matsuo M."/>
            <person name="Hiramatsu K."/>
        </authorList>
    </citation>
    <scope>NUCLEOTIDE SEQUENCE [LARGE SCALE GENOMIC DNA]</scope>
    <source>
        <strain>Mu3 / ATCC 700698</strain>
    </source>
</reference>
<sequence length="80" mass="9320">MATWLAIIFIVAALILGLIGGFLLARKYMMDYLKKNPPINEEMLRMMMMQMGQKPSQKKINQMMTMMNKNMDQNMKSAKK</sequence>
<protein>
    <recommendedName>
        <fullName evidence="1">UPF0154 protein SAHV_1332</fullName>
    </recommendedName>
</protein>
<feature type="chain" id="PRO_1000005637" description="UPF0154 protein SAHV_1332">
    <location>
        <begin position="1"/>
        <end position="80"/>
    </location>
</feature>
<feature type="transmembrane region" description="Helical" evidence="1">
    <location>
        <begin position="4"/>
        <end position="24"/>
    </location>
</feature>
<keyword id="KW-1003">Cell membrane</keyword>
<keyword id="KW-0472">Membrane</keyword>
<keyword id="KW-0812">Transmembrane</keyword>
<keyword id="KW-1133">Transmembrane helix</keyword>
<gene>
    <name type="ordered locus">SAHV_1332</name>
</gene>
<evidence type="ECO:0000255" key="1">
    <source>
        <dbReference type="HAMAP-Rule" id="MF_00363"/>
    </source>
</evidence>
<dbReference type="EMBL" id="AP009324">
    <property type="protein sequence ID" value="BAF78215.1"/>
    <property type="molecule type" value="Genomic_DNA"/>
</dbReference>
<dbReference type="RefSeq" id="WP_000246909.1">
    <property type="nucleotide sequence ID" value="NZ_CTYB01000021.1"/>
</dbReference>
<dbReference type="SMR" id="A7X1Z8"/>
<dbReference type="KEGG" id="saw:SAHV_1332"/>
<dbReference type="HOGENOM" id="CLU_180108_0_1_9"/>
<dbReference type="GO" id="GO:0005886">
    <property type="term" value="C:plasma membrane"/>
    <property type="evidence" value="ECO:0007669"/>
    <property type="project" value="UniProtKB-SubCell"/>
</dbReference>
<dbReference type="Gene3D" id="1.10.238.10">
    <property type="entry name" value="EF-hand"/>
    <property type="match status" value="1"/>
</dbReference>
<dbReference type="HAMAP" id="MF_00363">
    <property type="entry name" value="UPF0154"/>
    <property type="match status" value="1"/>
</dbReference>
<dbReference type="InterPro" id="IPR011992">
    <property type="entry name" value="EF-hand-dom_pair"/>
</dbReference>
<dbReference type="InterPro" id="IPR005359">
    <property type="entry name" value="UPF0154"/>
</dbReference>
<dbReference type="Pfam" id="PF03672">
    <property type="entry name" value="UPF0154"/>
    <property type="match status" value="1"/>
</dbReference>
<dbReference type="SUPFAM" id="SSF47473">
    <property type="entry name" value="EF-hand"/>
    <property type="match status" value="1"/>
</dbReference>